<reference key="1">
    <citation type="submission" date="2000-03" db="EMBL/GenBank/DDBJ databases">
        <title>Precursor homologs of the PSK-alpha peptide growth factor are conserved in structure but not primary sequence: identification and characterization of the rice gene family.</title>
        <authorList>
            <person name="Lorbiecke R."/>
            <person name="Sauter M."/>
        </authorList>
    </citation>
    <scope>NUCLEOTIDE SEQUENCE [MRNA]</scope>
    <source>
        <strain>cv. Pin Gaew 56</strain>
        <tissue>Root</tissue>
    </source>
</reference>
<reference key="2">
    <citation type="journal article" date="2005" name="PLoS Biol.">
        <title>The genomes of Oryza sativa: a history of duplications.</title>
        <authorList>
            <person name="Yu J."/>
            <person name="Wang J."/>
            <person name="Lin W."/>
            <person name="Li S."/>
            <person name="Li H."/>
            <person name="Zhou J."/>
            <person name="Ni P."/>
            <person name="Dong W."/>
            <person name="Hu S."/>
            <person name="Zeng C."/>
            <person name="Zhang J."/>
            <person name="Zhang Y."/>
            <person name="Li R."/>
            <person name="Xu Z."/>
            <person name="Li S."/>
            <person name="Li X."/>
            <person name="Zheng H."/>
            <person name="Cong L."/>
            <person name="Lin L."/>
            <person name="Yin J."/>
            <person name="Geng J."/>
            <person name="Li G."/>
            <person name="Shi J."/>
            <person name="Liu J."/>
            <person name="Lv H."/>
            <person name="Li J."/>
            <person name="Wang J."/>
            <person name="Deng Y."/>
            <person name="Ran L."/>
            <person name="Shi X."/>
            <person name="Wang X."/>
            <person name="Wu Q."/>
            <person name="Li C."/>
            <person name="Ren X."/>
            <person name="Wang J."/>
            <person name="Wang X."/>
            <person name="Li D."/>
            <person name="Liu D."/>
            <person name="Zhang X."/>
            <person name="Ji Z."/>
            <person name="Zhao W."/>
            <person name="Sun Y."/>
            <person name="Zhang Z."/>
            <person name="Bao J."/>
            <person name="Han Y."/>
            <person name="Dong L."/>
            <person name="Ji J."/>
            <person name="Chen P."/>
            <person name="Wu S."/>
            <person name="Liu J."/>
            <person name="Xiao Y."/>
            <person name="Bu D."/>
            <person name="Tan J."/>
            <person name="Yang L."/>
            <person name="Ye C."/>
            <person name="Zhang J."/>
            <person name="Xu J."/>
            <person name="Zhou Y."/>
            <person name="Yu Y."/>
            <person name="Zhang B."/>
            <person name="Zhuang S."/>
            <person name="Wei H."/>
            <person name="Liu B."/>
            <person name="Lei M."/>
            <person name="Yu H."/>
            <person name="Li Y."/>
            <person name="Xu H."/>
            <person name="Wei S."/>
            <person name="He X."/>
            <person name="Fang L."/>
            <person name="Zhang Z."/>
            <person name="Zhang Y."/>
            <person name="Huang X."/>
            <person name="Su Z."/>
            <person name="Tong W."/>
            <person name="Li J."/>
            <person name="Tong Z."/>
            <person name="Li S."/>
            <person name="Ye J."/>
            <person name="Wang L."/>
            <person name="Fang L."/>
            <person name="Lei T."/>
            <person name="Chen C.-S."/>
            <person name="Chen H.-C."/>
            <person name="Xu Z."/>
            <person name="Li H."/>
            <person name="Huang H."/>
            <person name="Zhang F."/>
            <person name="Xu H."/>
            <person name="Li N."/>
            <person name="Zhao C."/>
            <person name="Li S."/>
            <person name="Dong L."/>
            <person name="Huang Y."/>
            <person name="Li L."/>
            <person name="Xi Y."/>
            <person name="Qi Q."/>
            <person name="Li W."/>
            <person name="Zhang B."/>
            <person name="Hu W."/>
            <person name="Zhang Y."/>
            <person name="Tian X."/>
            <person name="Jiao Y."/>
            <person name="Liang X."/>
            <person name="Jin J."/>
            <person name="Gao L."/>
            <person name="Zheng W."/>
            <person name="Hao B."/>
            <person name="Liu S.-M."/>
            <person name="Wang W."/>
            <person name="Yuan L."/>
            <person name="Cao M."/>
            <person name="McDermott J."/>
            <person name="Samudrala R."/>
            <person name="Wang J."/>
            <person name="Wong G.K.-S."/>
            <person name="Yang H."/>
        </authorList>
    </citation>
    <scope>NUCLEOTIDE SEQUENCE [LARGE SCALE GENOMIC DNA]</scope>
    <source>
        <strain>cv. 93-11</strain>
    </source>
</reference>
<reference key="3">
    <citation type="journal article" date="1997" name="Proc. Natl. Acad. Sci. U.S.A.">
        <title>Phytosulfokine-alpha, a sulfated pentapeptide, stimulates the proliferation of rice cells by means of specific high- and low-affinity binding sites.</title>
        <authorList>
            <person name="Matsubayashi Y."/>
            <person name="Takagi L."/>
            <person name="Sakagami Y."/>
        </authorList>
    </citation>
    <scope>PROTEIN SEQUENCE OF PSK-ALPHA AND PSK-BETA</scope>
    <scope>CHARACTERIZATION</scope>
    <scope>SULFATION AT TYR-110 AND TYR-112</scope>
</reference>
<keyword id="KW-0217">Developmental protein</keyword>
<keyword id="KW-0221">Differentiation</keyword>
<keyword id="KW-0903">Direct protein sequencing</keyword>
<keyword id="KW-0339">Growth factor</keyword>
<keyword id="KW-1185">Reference proteome</keyword>
<keyword id="KW-0964">Secreted</keyword>
<keyword id="KW-0732">Signal</keyword>
<keyword id="KW-0765">Sulfation</keyword>
<evidence type="ECO:0000250" key="1"/>
<evidence type="ECO:0000255" key="2"/>
<evidence type="ECO:0000269" key="3">
    <source>
    </source>
</evidence>
<evidence type="ECO:0000305" key="4"/>
<feature type="signal peptide" evidence="2">
    <location>
        <begin position="1"/>
        <end position="34"/>
    </location>
</feature>
<feature type="propeptide" id="PRO_0000300866" evidence="2">
    <location>
        <begin position="35"/>
        <end position="109"/>
    </location>
</feature>
<feature type="peptide" id="PRO_0000300867" description="Phytosulfokine-alpha" evidence="3">
    <location>
        <begin position="110"/>
        <end position="114"/>
    </location>
</feature>
<feature type="peptide" id="PRO_0000300868" description="Phytosulfokine-beta" evidence="3">
    <location>
        <begin position="110"/>
        <end position="113"/>
    </location>
</feature>
<feature type="propeptide" id="PRO_0000300869" evidence="2">
    <location>
        <begin position="115"/>
        <end position="119"/>
    </location>
</feature>
<feature type="modified residue" description="Sulfotyrosine" evidence="3">
    <location>
        <position position="110"/>
    </location>
</feature>
<feature type="modified residue" description="Sulfotyrosine" evidence="3">
    <location>
        <position position="112"/>
    </location>
</feature>
<feature type="sequence conflict" description="In Ref. 1; CAC34732." evidence="4" ref="1">
    <original>S</original>
    <variation>F</variation>
    <location>
        <position position="31"/>
    </location>
</feature>
<accession>A2ZBG5</accession>
<accession>Q53PX4</accession>
<accession>Q9AR89</accession>
<gene>
    <name type="primary">PSK2</name>
    <name type="ORF">OsI_033908</name>
</gene>
<proteinExistence type="evidence at protein level"/>
<organism>
    <name type="scientific">Oryza sativa subsp. indica</name>
    <name type="common">Rice</name>
    <dbReference type="NCBI Taxonomy" id="39946"/>
    <lineage>
        <taxon>Eukaryota</taxon>
        <taxon>Viridiplantae</taxon>
        <taxon>Streptophyta</taxon>
        <taxon>Embryophyta</taxon>
        <taxon>Tracheophyta</taxon>
        <taxon>Spermatophyta</taxon>
        <taxon>Magnoliopsida</taxon>
        <taxon>Liliopsida</taxon>
        <taxon>Poales</taxon>
        <taxon>Poaceae</taxon>
        <taxon>BOP clade</taxon>
        <taxon>Oryzoideae</taxon>
        <taxon>Oryzeae</taxon>
        <taxon>Oryzinae</taxon>
        <taxon>Oryza</taxon>
        <taxon>Oryza sativa</taxon>
    </lineage>
</organism>
<name>PSK2_ORYSI</name>
<comment type="function">
    <text>Promotes plant cell differentiation, organogenesis and somatic embryogenesis as well as cell proliferation.</text>
</comment>
<comment type="subcellular location">
    <subcellularLocation>
        <location evidence="1">Secreted</location>
    </subcellularLocation>
</comment>
<comment type="PTM">
    <text evidence="3">Sulfation is important for activity and for the binding to a putative membrane receptor.</text>
</comment>
<comment type="PTM">
    <text>PSK-alpha is produced by endopeptidase digestion. PSK-beta is produced from PSK-alpha by exopeptidase digestion.</text>
</comment>
<comment type="similarity">
    <text evidence="4">Belongs to the phytosulfokine family.</text>
</comment>
<dbReference type="EMBL" id="AJ276692">
    <property type="protein sequence ID" value="CAC34732.1"/>
    <property type="molecule type" value="mRNA"/>
</dbReference>
<dbReference type="EMBL" id="CM000136">
    <property type="protein sequence ID" value="EAY79949.1"/>
    <property type="molecule type" value="Genomic_DNA"/>
</dbReference>
<dbReference type="EnsemblPlants" id="BGIOSGA034799-TA">
    <property type="protein sequence ID" value="BGIOSGA034799-PA"/>
    <property type="gene ID" value="BGIOSGA034799"/>
</dbReference>
<dbReference type="EnsemblPlants" id="OsGoSa_11g0003390.01">
    <property type="protein sequence ID" value="OsGoSa_11g0003390.01"/>
    <property type="gene ID" value="OsGoSa_11g0003390"/>
</dbReference>
<dbReference type="EnsemblPlants" id="OsIR64_11g0003390.01">
    <property type="protein sequence ID" value="OsIR64_11g0003390.01"/>
    <property type="gene ID" value="OsIR64_11g0003390"/>
</dbReference>
<dbReference type="EnsemblPlants" id="OsKYG_11g0003410.01">
    <property type="protein sequence ID" value="OsKYG_11g0003410.01"/>
    <property type="gene ID" value="OsKYG_11g0003410"/>
</dbReference>
<dbReference type="EnsemblPlants" id="OsLaMu_11g0003400.01">
    <property type="protein sequence ID" value="OsLaMu_11g0003400.01"/>
    <property type="gene ID" value="OsLaMu_11g0003400"/>
</dbReference>
<dbReference type="EnsemblPlants" id="OsMH63_11G003450_01">
    <property type="protein sequence ID" value="OsMH63_11G003450_01"/>
    <property type="gene ID" value="OsMH63_11G003450"/>
</dbReference>
<dbReference type="EnsemblPlants" id="OsPr106_11g0003320.01">
    <property type="protein sequence ID" value="OsPr106_11g0003320.01"/>
    <property type="gene ID" value="OsPr106_11g0003320"/>
</dbReference>
<dbReference type="Gramene" id="BGIOSGA034799-TA">
    <property type="protein sequence ID" value="BGIOSGA034799-PA"/>
    <property type="gene ID" value="BGIOSGA034799"/>
</dbReference>
<dbReference type="Gramene" id="OsGoSa_11g0003390.01">
    <property type="protein sequence ID" value="OsGoSa_11g0003390.01"/>
    <property type="gene ID" value="OsGoSa_11g0003390"/>
</dbReference>
<dbReference type="Gramene" id="OsIR64_11g0003390.01">
    <property type="protein sequence ID" value="OsIR64_11g0003390.01"/>
    <property type="gene ID" value="OsIR64_11g0003390"/>
</dbReference>
<dbReference type="Gramene" id="OsKYG_11g0003410.01">
    <property type="protein sequence ID" value="OsKYG_11g0003410.01"/>
    <property type="gene ID" value="OsKYG_11g0003410"/>
</dbReference>
<dbReference type="Gramene" id="OsLaMu_11g0003400.01">
    <property type="protein sequence ID" value="OsLaMu_11g0003400.01"/>
    <property type="gene ID" value="OsLaMu_11g0003400"/>
</dbReference>
<dbReference type="Gramene" id="OsMH63_11G003450_01">
    <property type="protein sequence ID" value="OsMH63_11G003450_01"/>
    <property type="gene ID" value="OsMH63_11G003450"/>
</dbReference>
<dbReference type="Gramene" id="OsPr106_11g0003320.01">
    <property type="protein sequence ID" value="OsPr106_11g0003320.01"/>
    <property type="gene ID" value="OsPr106_11g0003320"/>
</dbReference>
<dbReference type="HOGENOM" id="CLU_132277_0_0_1"/>
<dbReference type="OMA" id="NDECLQR"/>
<dbReference type="Proteomes" id="UP000007015">
    <property type="component" value="Chromosome 11"/>
</dbReference>
<dbReference type="GO" id="GO:0005576">
    <property type="term" value="C:extracellular region"/>
    <property type="evidence" value="ECO:0007669"/>
    <property type="project" value="UniProtKB-SubCell"/>
</dbReference>
<dbReference type="GO" id="GO:0008083">
    <property type="term" value="F:growth factor activity"/>
    <property type="evidence" value="ECO:0007669"/>
    <property type="project" value="UniProtKB-KW"/>
</dbReference>
<dbReference type="GO" id="GO:0030154">
    <property type="term" value="P:cell differentiation"/>
    <property type="evidence" value="ECO:0007669"/>
    <property type="project" value="UniProtKB-KW"/>
</dbReference>
<dbReference type="GO" id="GO:0008283">
    <property type="term" value="P:cell population proliferation"/>
    <property type="evidence" value="ECO:0007669"/>
    <property type="project" value="InterPro"/>
</dbReference>
<dbReference type="InterPro" id="IPR009438">
    <property type="entry name" value="Phytosulfokine"/>
</dbReference>
<dbReference type="PANTHER" id="PTHR33285">
    <property type="entry name" value="PHYTOSULFOKINES 3"/>
    <property type="match status" value="1"/>
</dbReference>
<dbReference type="PANTHER" id="PTHR33285:SF32">
    <property type="entry name" value="PHYTOSULFOKINES 5"/>
    <property type="match status" value="1"/>
</dbReference>
<dbReference type="Pfam" id="PF06404">
    <property type="entry name" value="PSK"/>
    <property type="match status" value="1"/>
</dbReference>
<sequence length="119" mass="12564">MSTTRGVSSSSAAAALALLLLFALCFFSFHSAAAARAVPRDEHQENGGVKAVAAVAADQLVLQLEGDTGNGDEVSELMGAAEEEAAACEEGKNNDECVQRRLLSDAHLDYIYTQHKNKP</sequence>
<protein>
    <recommendedName>
        <fullName>Phytosulfokines 2</fullName>
    </recommendedName>
    <component>
        <recommendedName>
            <fullName>Phytosulfokine-alpha</fullName>
            <shortName>PSK-alpha</shortName>
            <shortName>Phytosulfokine-a</shortName>
        </recommendedName>
    </component>
    <component>
        <recommendedName>
            <fullName>Phytosulfokine-beta</fullName>
            <shortName>PSK-beta</shortName>
            <shortName>Phytosulfokine-b</shortName>
        </recommendedName>
    </component>
</protein>